<accession>Q0HX86</accession>
<feature type="chain" id="PRO_1000046685" description="UPF0301 protein Shewmr7_1270">
    <location>
        <begin position="1"/>
        <end position="187"/>
    </location>
</feature>
<comment type="similarity">
    <text evidence="1">Belongs to the UPF0301 (AlgH) family.</text>
</comment>
<dbReference type="EMBL" id="CP000444">
    <property type="protein sequence ID" value="ABI42269.1"/>
    <property type="molecule type" value="Genomic_DNA"/>
</dbReference>
<dbReference type="SMR" id="Q0HX86"/>
<dbReference type="KEGG" id="shm:Shewmr7_1270"/>
<dbReference type="HOGENOM" id="CLU_057596_1_0_6"/>
<dbReference type="GO" id="GO:0005829">
    <property type="term" value="C:cytosol"/>
    <property type="evidence" value="ECO:0007669"/>
    <property type="project" value="TreeGrafter"/>
</dbReference>
<dbReference type="Gene3D" id="3.40.1740.10">
    <property type="entry name" value="VC0467-like"/>
    <property type="match status" value="1"/>
</dbReference>
<dbReference type="Gene3D" id="3.30.70.1300">
    <property type="entry name" value="VC0467-like domains"/>
    <property type="match status" value="1"/>
</dbReference>
<dbReference type="HAMAP" id="MF_00758">
    <property type="entry name" value="UPF0301"/>
    <property type="match status" value="1"/>
</dbReference>
<dbReference type="InterPro" id="IPR003774">
    <property type="entry name" value="AlgH-like"/>
</dbReference>
<dbReference type="NCBIfam" id="NF001266">
    <property type="entry name" value="PRK00228.1-1"/>
    <property type="match status" value="1"/>
</dbReference>
<dbReference type="PANTHER" id="PTHR30327">
    <property type="entry name" value="UNCHARACTERIZED PROTEIN YQGE"/>
    <property type="match status" value="1"/>
</dbReference>
<dbReference type="PANTHER" id="PTHR30327:SF1">
    <property type="entry name" value="UPF0301 PROTEIN YQGE"/>
    <property type="match status" value="1"/>
</dbReference>
<dbReference type="Pfam" id="PF02622">
    <property type="entry name" value="DUF179"/>
    <property type="match status" value="1"/>
</dbReference>
<dbReference type="SUPFAM" id="SSF143456">
    <property type="entry name" value="VC0467-like"/>
    <property type="match status" value="1"/>
</dbReference>
<sequence>MESLQNHFLIAMPSLDDTFFERTVIYLCEHDEKGAMGLVINKPLGIEVNSLLEQMDLPAEQVSTDLALGAQVLMGGPVSQDRGFVLHTSQPYWANSTELSSGLMLTTSRDVLTAIGSERSPEKFIVALGYAGWSKNQLEQELADNSWLTIPADQALLFDVKHEDRWQQASRALGFDAWQLSSQAGHA</sequence>
<reference key="1">
    <citation type="submission" date="2006-08" db="EMBL/GenBank/DDBJ databases">
        <title>Complete sequence of chromosome 1 of Shewanella sp. MR-7.</title>
        <authorList>
            <person name="Copeland A."/>
            <person name="Lucas S."/>
            <person name="Lapidus A."/>
            <person name="Barry K."/>
            <person name="Detter J.C."/>
            <person name="Glavina del Rio T."/>
            <person name="Hammon N."/>
            <person name="Israni S."/>
            <person name="Dalin E."/>
            <person name="Tice H."/>
            <person name="Pitluck S."/>
            <person name="Kiss H."/>
            <person name="Brettin T."/>
            <person name="Bruce D."/>
            <person name="Han C."/>
            <person name="Tapia R."/>
            <person name="Gilna P."/>
            <person name="Schmutz J."/>
            <person name="Larimer F."/>
            <person name="Land M."/>
            <person name="Hauser L."/>
            <person name="Kyrpides N."/>
            <person name="Mikhailova N."/>
            <person name="Nealson K."/>
            <person name="Konstantinidis K."/>
            <person name="Klappenbach J."/>
            <person name="Tiedje J."/>
            <person name="Richardson P."/>
        </authorList>
    </citation>
    <scope>NUCLEOTIDE SEQUENCE [LARGE SCALE GENOMIC DNA]</scope>
    <source>
        <strain>MR-7</strain>
    </source>
</reference>
<proteinExistence type="inferred from homology"/>
<gene>
    <name type="ordered locus">Shewmr7_1270</name>
</gene>
<organism>
    <name type="scientific">Shewanella sp. (strain MR-7)</name>
    <dbReference type="NCBI Taxonomy" id="60481"/>
    <lineage>
        <taxon>Bacteria</taxon>
        <taxon>Pseudomonadati</taxon>
        <taxon>Pseudomonadota</taxon>
        <taxon>Gammaproteobacteria</taxon>
        <taxon>Alteromonadales</taxon>
        <taxon>Shewanellaceae</taxon>
        <taxon>Shewanella</taxon>
    </lineage>
</organism>
<protein>
    <recommendedName>
        <fullName evidence="1">UPF0301 protein Shewmr7_1270</fullName>
    </recommendedName>
</protein>
<name>Y1270_SHESR</name>
<evidence type="ECO:0000255" key="1">
    <source>
        <dbReference type="HAMAP-Rule" id="MF_00758"/>
    </source>
</evidence>